<accession>P64073</accession>
<accession>Q97PN5</accession>
<gene>
    <name evidence="1" type="primary">engB</name>
    <name type="ordered locus">spr1426</name>
</gene>
<evidence type="ECO:0000255" key="1">
    <source>
        <dbReference type="HAMAP-Rule" id="MF_00321"/>
    </source>
</evidence>
<evidence type="ECO:0000305" key="2"/>
<feature type="chain" id="PRO_0000157789" description="Probable GTP-binding protein EngB">
    <location>
        <begin position="1"/>
        <end position="195"/>
    </location>
</feature>
<feature type="domain" description="EngB-type G" evidence="1">
    <location>
        <begin position="24"/>
        <end position="195"/>
    </location>
</feature>
<feature type="binding site" evidence="1">
    <location>
        <begin position="32"/>
        <end position="39"/>
    </location>
    <ligand>
        <name>GTP</name>
        <dbReference type="ChEBI" id="CHEBI:37565"/>
    </ligand>
</feature>
<feature type="binding site" evidence="1">
    <location>
        <position position="39"/>
    </location>
    <ligand>
        <name>Mg(2+)</name>
        <dbReference type="ChEBI" id="CHEBI:18420"/>
    </ligand>
</feature>
<feature type="binding site" evidence="1">
    <location>
        <begin position="59"/>
        <end position="63"/>
    </location>
    <ligand>
        <name>GTP</name>
        <dbReference type="ChEBI" id="CHEBI:37565"/>
    </ligand>
</feature>
<feature type="binding site" evidence="1">
    <location>
        <position position="61"/>
    </location>
    <ligand>
        <name>Mg(2+)</name>
        <dbReference type="ChEBI" id="CHEBI:18420"/>
    </ligand>
</feature>
<feature type="binding site" evidence="1">
    <location>
        <begin position="77"/>
        <end position="80"/>
    </location>
    <ligand>
        <name>GTP</name>
        <dbReference type="ChEBI" id="CHEBI:37565"/>
    </ligand>
</feature>
<feature type="binding site" evidence="1">
    <location>
        <begin position="144"/>
        <end position="147"/>
    </location>
    <ligand>
        <name>GTP</name>
        <dbReference type="ChEBI" id="CHEBI:37565"/>
    </ligand>
</feature>
<feature type="binding site" evidence="1">
    <location>
        <begin position="176"/>
        <end position="178"/>
    </location>
    <ligand>
        <name>GTP</name>
        <dbReference type="ChEBI" id="CHEBI:37565"/>
    </ligand>
</feature>
<organism>
    <name type="scientific">Streptococcus pneumoniae (strain ATCC BAA-255 / R6)</name>
    <dbReference type="NCBI Taxonomy" id="171101"/>
    <lineage>
        <taxon>Bacteria</taxon>
        <taxon>Bacillati</taxon>
        <taxon>Bacillota</taxon>
        <taxon>Bacilli</taxon>
        <taxon>Lactobacillales</taxon>
        <taxon>Streptococcaceae</taxon>
        <taxon>Streptococcus</taxon>
    </lineage>
</organism>
<sequence length="195" mass="22273">MELNTHNAEILLSAANKSHYPQDELPEIALAGRSNVGKSSFINTMLNRKNLARTSGKPGKTQLLNFFNIDDKMRFVDVPGYGYARVSKKEREKWGCMIEEYLTTRENLRAVVSLVDLRHDPSADDVQMYEFLKYYEIPVIIVATKADKIPRGKWNKHESAIKKKLNFDPSDDFILFSSVSKAGMDEAWDAILEKL</sequence>
<keyword id="KW-0131">Cell cycle</keyword>
<keyword id="KW-0132">Cell division</keyword>
<keyword id="KW-0342">GTP-binding</keyword>
<keyword id="KW-0460">Magnesium</keyword>
<keyword id="KW-0479">Metal-binding</keyword>
<keyword id="KW-0547">Nucleotide-binding</keyword>
<keyword id="KW-1185">Reference proteome</keyword>
<keyword id="KW-0717">Septation</keyword>
<reference key="1">
    <citation type="journal article" date="2001" name="J. Bacteriol.">
        <title>Genome of the bacterium Streptococcus pneumoniae strain R6.</title>
        <authorList>
            <person name="Hoskins J."/>
            <person name="Alborn W.E. Jr."/>
            <person name="Arnold J."/>
            <person name="Blaszczak L.C."/>
            <person name="Burgett S."/>
            <person name="DeHoff B.S."/>
            <person name="Estrem S.T."/>
            <person name="Fritz L."/>
            <person name="Fu D.-J."/>
            <person name="Fuller W."/>
            <person name="Geringer C."/>
            <person name="Gilmour R."/>
            <person name="Glass J.S."/>
            <person name="Khoja H."/>
            <person name="Kraft A.R."/>
            <person name="Lagace R.E."/>
            <person name="LeBlanc D.J."/>
            <person name="Lee L.N."/>
            <person name="Lefkowitz E.J."/>
            <person name="Lu J."/>
            <person name="Matsushima P."/>
            <person name="McAhren S.M."/>
            <person name="McHenney M."/>
            <person name="McLeaster K."/>
            <person name="Mundy C.W."/>
            <person name="Nicas T.I."/>
            <person name="Norris F.H."/>
            <person name="O'Gara M."/>
            <person name="Peery R.B."/>
            <person name="Robertson G.T."/>
            <person name="Rockey P."/>
            <person name="Sun P.-M."/>
            <person name="Winkler M.E."/>
            <person name="Yang Y."/>
            <person name="Young-Bellido M."/>
            <person name="Zhao G."/>
            <person name="Zook C.A."/>
            <person name="Baltz R.H."/>
            <person name="Jaskunas S.R."/>
            <person name="Rosteck P.R. Jr."/>
            <person name="Skatrud P.L."/>
            <person name="Glass J.I."/>
        </authorList>
    </citation>
    <scope>NUCLEOTIDE SEQUENCE [LARGE SCALE GENOMIC DNA]</scope>
    <source>
        <strain>ATCC BAA-255 / R6</strain>
    </source>
</reference>
<protein>
    <recommendedName>
        <fullName evidence="1">Probable GTP-binding protein EngB</fullName>
    </recommendedName>
</protein>
<dbReference type="EMBL" id="AE007317">
    <property type="protein sequence ID" value="AAL00230.1"/>
    <property type="status" value="ALT_INIT"/>
    <property type="molecule type" value="Genomic_DNA"/>
</dbReference>
<dbReference type="PIR" id="A98050">
    <property type="entry name" value="A98050"/>
</dbReference>
<dbReference type="RefSeq" id="NP_359019.1">
    <property type="nucleotide sequence ID" value="NC_003098.1"/>
</dbReference>
<dbReference type="SMR" id="P64073"/>
<dbReference type="STRING" id="171101.spr1426"/>
<dbReference type="KEGG" id="spr:spr1426"/>
<dbReference type="PATRIC" id="fig|171101.6.peg.1541"/>
<dbReference type="eggNOG" id="COG0218">
    <property type="taxonomic scope" value="Bacteria"/>
</dbReference>
<dbReference type="HOGENOM" id="CLU_033732_3_0_9"/>
<dbReference type="Proteomes" id="UP000000586">
    <property type="component" value="Chromosome"/>
</dbReference>
<dbReference type="GO" id="GO:0005829">
    <property type="term" value="C:cytosol"/>
    <property type="evidence" value="ECO:0000318"/>
    <property type="project" value="GO_Central"/>
</dbReference>
<dbReference type="GO" id="GO:0005525">
    <property type="term" value="F:GTP binding"/>
    <property type="evidence" value="ECO:0007669"/>
    <property type="project" value="UniProtKB-UniRule"/>
</dbReference>
<dbReference type="GO" id="GO:0046872">
    <property type="term" value="F:metal ion binding"/>
    <property type="evidence" value="ECO:0007669"/>
    <property type="project" value="UniProtKB-KW"/>
</dbReference>
<dbReference type="GO" id="GO:0000917">
    <property type="term" value="P:division septum assembly"/>
    <property type="evidence" value="ECO:0007669"/>
    <property type="project" value="UniProtKB-KW"/>
</dbReference>
<dbReference type="CDD" id="cd01876">
    <property type="entry name" value="YihA_EngB"/>
    <property type="match status" value="1"/>
</dbReference>
<dbReference type="FunFam" id="3.40.50.300:FF:000098">
    <property type="entry name" value="Probable GTP-binding protein EngB"/>
    <property type="match status" value="1"/>
</dbReference>
<dbReference type="Gene3D" id="3.40.50.300">
    <property type="entry name" value="P-loop containing nucleotide triphosphate hydrolases"/>
    <property type="match status" value="1"/>
</dbReference>
<dbReference type="HAMAP" id="MF_00321">
    <property type="entry name" value="GTPase_EngB"/>
    <property type="match status" value="1"/>
</dbReference>
<dbReference type="InterPro" id="IPR030393">
    <property type="entry name" value="G_ENGB_dom"/>
</dbReference>
<dbReference type="InterPro" id="IPR006073">
    <property type="entry name" value="GTP-bd"/>
</dbReference>
<dbReference type="InterPro" id="IPR019987">
    <property type="entry name" value="GTP-bd_ribosome_bio_YsxC"/>
</dbReference>
<dbReference type="InterPro" id="IPR027417">
    <property type="entry name" value="P-loop_NTPase"/>
</dbReference>
<dbReference type="NCBIfam" id="TIGR03598">
    <property type="entry name" value="GTPase_YsxC"/>
    <property type="match status" value="1"/>
</dbReference>
<dbReference type="PANTHER" id="PTHR11649:SF13">
    <property type="entry name" value="ENGB-TYPE G DOMAIN-CONTAINING PROTEIN"/>
    <property type="match status" value="1"/>
</dbReference>
<dbReference type="PANTHER" id="PTHR11649">
    <property type="entry name" value="MSS1/TRME-RELATED GTP-BINDING PROTEIN"/>
    <property type="match status" value="1"/>
</dbReference>
<dbReference type="Pfam" id="PF01926">
    <property type="entry name" value="MMR_HSR1"/>
    <property type="match status" value="1"/>
</dbReference>
<dbReference type="PRINTS" id="PR00449">
    <property type="entry name" value="RASTRNSFRMNG"/>
</dbReference>
<dbReference type="SUPFAM" id="SSF52540">
    <property type="entry name" value="P-loop containing nucleoside triphosphate hydrolases"/>
    <property type="match status" value="1"/>
</dbReference>
<dbReference type="PROSITE" id="PS51706">
    <property type="entry name" value="G_ENGB"/>
    <property type="match status" value="1"/>
</dbReference>
<name>ENGB_STRR6</name>
<proteinExistence type="inferred from homology"/>
<comment type="function">
    <text evidence="1">Necessary for normal cell division and for the maintenance of normal septation.</text>
</comment>
<comment type="cofactor">
    <cofactor evidence="1">
        <name>Mg(2+)</name>
        <dbReference type="ChEBI" id="CHEBI:18420"/>
    </cofactor>
</comment>
<comment type="similarity">
    <text evidence="1">Belongs to the TRAFAC class TrmE-Era-EngA-EngB-Septin-like GTPase superfamily. EngB GTPase family.</text>
</comment>
<comment type="sequence caution" evidence="2">
    <conflict type="erroneous initiation">
        <sequence resource="EMBL-CDS" id="AAL00230"/>
    </conflict>
</comment>